<gene>
    <name type="primary">NAT2</name>
    <name type="ordered locus">At2g34190</name>
    <name type="ORF">F13P17.3</name>
</gene>
<feature type="chain" id="PRO_0000270159" description="Nucleobase-ascorbate transporter 2">
    <location>
        <begin position="1"/>
        <end position="524"/>
    </location>
</feature>
<feature type="transmembrane region" description="Helical" evidence="1">
    <location>
        <begin position="41"/>
        <end position="61"/>
    </location>
</feature>
<feature type="transmembrane region" description="Helical" evidence="1">
    <location>
        <begin position="69"/>
        <end position="89"/>
    </location>
</feature>
<feature type="transmembrane region" description="Helical" evidence="1">
    <location>
        <begin position="91"/>
        <end position="111"/>
    </location>
</feature>
<feature type="transmembrane region" description="Helical" evidence="1">
    <location>
        <begin position="133"/>
        <end position="153"/>
    </location>
</feature>
<feature type="transmembrane region" description="Helical" evidence="1">
    <location>
        <begin position="155"/>
        <end position="175"/>
    </location>
</feature>
<feature type="transmembrane region" description="Helical" evidence="1">
    <location>
        <begin position="179"/>
        <end position="199"/>
    </location>
</feature>
<feature type="transmembrane region" description="Helical" evidence="1">
    <location>
        <begin position="217"/>
        <end position="237"/>
    </location>
</feature>
<feature type="transmembrane region" description="Helical" evidence="1">
    <location>
        <begin position="282"/>
        <end position="302"/>
    </location>
</feature>
<feature type="transmembrane region" description="Helical" evidence="1">
    <location>
        <begin position="359"/>
        <end position="379"/>
    </location>
</feature>
<feature type="transmembrane region" description="Helical" evidence="1">
    <location>
        <begin position="380"/>
        <end position="400"/>
    </location>
</feature>
<feature type="transmembrane region" description="Helical" evidence="1">
    <location>
        <begin position="419"/>
        <end position="439"/>
    </location>
</feature>
<feature type="transmembrane region" description="Helical" evidence="1">
    <location>
        <begin position="457"/>
        <end position="477"/>
    </location>
</feature>
<feature type="sequence conflict" description="In Ref. 3; AAK59632." evidence="3" ref="3">
    <original>L</original>
    <variation>F</variation>
    <location>
        <position position="193"/>
    </location>
</feature>
<dbReference type="EMBL" id="AC004481">
    <property type="protein sequence ID" value="AAC27395.1"/>
    <property type="molecule type" value="Genomic_DNA"/>
</dbReference>
<dbReference type="EMBL" id="CP002685">
    <property type="protein sequence ID" value="AEC08934.1"/>
    <property type="molecule type" value="Genomic_DNA"/>
</dbReference>
<dbReference type="EMBL" id="AY035127">
    <property type="protein sequence ID" value="AAK59632.1"/>
    <property type="molecule type" value="mRNA"/>
</dbReference>
<dbReference type="EMBL" id="AY142641">
    <property type="protein sequence ID" value="AAN13099.1"/>
    <property type="molecule type" value="mRNA"/>
</dbReference>
<dbReference type="PIR" id="T02307">
    <property type="entry name" value="T02307"/>
</dbReference>
<dbReference type="RefSeq" id="NP_180966.1">
    <property type="nucleotide sequence ID" value="NM_128970.2"/>
</dbReference>
<dbReference type="SMR" id="Q94C70"/>
<dbReference type="BioGRID" id="3327">
    <property type="interactions" value="1"/>
</dbReference>
<dbReference type="FunCoup" id="Q94C70">
    <property type="interactions" value="858"/>
</dbReference>
<dbReference type="IntAct" id="Q94C70">
    <property type="interactions" value="1"/>
</dbReference>
<dbReference type="STRING" id="3702.Q94C70"/>
<dbReference type="PaxDb" id="3702-AT2G34190.1"/>
<dbReference type="ProteomicsDB" id="251047"/>
<dbReference type="EnsemblPlants" id="AT2G34190.1">
    <property type="protein sequence ID" value="AT2G34190.1"/>
    <property type="gene ID" value="AT2G34190"/>
</dbReference>
<dbReference type="GeneID" id="817980"/>
<dbReference type="Gramene" id="AT2G34190.1">
    <property type="protein sequence ID" value="AT2G34190.1"/>
    <property type="gene ID" value="AT2G34190"/>
</dbReference>
<dbReference type="KEGG" id="ath:AT2G34190"/>
<dbReference type="Araport" id="AT2G34190"/>
<dbReference type="TAIR" id="AT2G34190"/>
<dbReference type="eggNOG" id="KOG1292">
    <property type="taxonomic scope" value="Eukaryota"/>
</dbReference>
<dbReference type="HOGENOM" id="CLU_017959_5_3_1"/>
<dbReference type="InParanoid" id="Q94C70"/>
<dbReference type="OMA" id="FGLCPKF"/>
<dbReference type="OrthoDB" id="1641903at2759"/>
<dbReference type="PhylomeDB" id="Q94C70"/>
<dbReference type="PRO" id="PR:Q94C70"/>
<dbReference type="Proteomes" id="UP000006548">
    <property type="component" value="Chromosome 2"/>
</dbReference>
<dbReference type="ExpressionAtlas" id="Q94C70">
    <property type="expression patterns" value="baseline and differential"/>
</dbReference>
<dbReference type="GO" id="GO:0016020">
    <property type="term" value="C:membrane"/>
    <property type="evidence" value="ECO:0007669"/>
    <property type="project" value="UniProtKB-SubCell"/>
</dbReference>
<dbReference type="GO" id="GO:0022857">
    <property type="term" value="F:transmembrane transporter activity"/>
    <property type="evidence" value="ECO:0007669"/>
    <property type="project" value="InterPro"/>
</dbReference>
<dbReference type="InterPro" id="IPR035906">
    <property type="entry name" value="MetI-like_sf"/>
</dbReference>
<dbReference type="InterPro" id="IPR006043">
    <property type="entry name" value="NCS2"/>
</dbReference>
<dbReference type="NCBIfam" id="NF037981">
    <property type="entry name" value="NCS2_1"/>
    <property type="match status" value="1"/>
</dbReference>
<dbReference type="PANTHER" id="PTHR11119">
    <property type="entry name" value="XANTHINE-URACIL / VITAMIN C PERMEASE FAMILY MEMBER"/>
    <property type="match status" value="1"/>
</dbReference>
<dbReference type="Pfam" id="PF00860">
    <property type="entry name" value="Xan_ur_permease"/>
    <property type="match status" value="1"/>
</dbReference>
<dbReference type="SUPFAM" id="SSF161098">
    <property type="entry name" value="MetI-like"/>
    <property type="match status" value="1"/>
</dbReference>
<comment type="subcellular location">
    <subcellularLocation>
        <location evidence="3">Membrane</location>
        <topology evidence="3">Multi-pass membrane protein</topology>
    </subcellularLocation>
</comment>
<comment type="tissue specificity">
    <text evidence="2">Expressed in cotyledons 10 days after imbibition (DAI). Expressed in the minor and major veins of cotyledons and leaves, in the shoot apex and pedicels. Expressed in the root meristems, root tips and lateral root primordia.</text>
</comment>
<comment type="developmental stage">
    <text evidence="2">Highly expressed in gynoecium development, disappearing with maturation.</text>
</comment>
<comment type="similarity">
    <text evidence="3">Belongs to the nucleobase:cation symporter-2 (NCS2) (TC 2.A.40) family.</text>
</comment>
<name>NAT2_ARATH</name>
<accession>Q94C70</accession>
<accession>O80768</accession>
<evidence type="ECO:0000255" key="1"/>
<evidence type="ECO:0000269" key="2">
    <source>
    </source>
</evidence>
<evidence type="ECO:0000305" key="3"/>
<sequence>MDLVKPEEISHPPMDQLQGLEYCIDSNPPWGEAIALGFEHYILALGTAVMIPSILVPMMGGDDGDKVRVVQTLLFLQGVNTLLQTLFGTRLPTVIGGSYAFMVPIISIIHDSSLTRIEDPQLRFLSTMRAVQGAIIVASSVQIILGFSQMWAICSRFFSPIGMVPVIALTGFGLFNRGFPVVGNCVEIGLPMLILFVIFSQYLKNFQFRQFPVVERFALIIALIIVWAYAHVLTASGAYKHRPHQTQLNCRTDMSNLISSAPWIKIPYPLQWGAPSFDAGHAFAMMAAVLVSLIESTGAFKAAARLASATPPPPHVLSRGIGWQGIGILLNGLFGTLSGSSVSVENIGLLGSTRVGSRRVIQISAGFMIFFSMLGKFGALFASIPFTIFAAVYCVLFGLVASVGLSFLQFTNMNSLRNLFIVGVSLFLGLSIPEYFRDFSMKALHGPAHTNAGWFNDFLNTIFLSSPMVALMVAVFLDNTLDYKETARDRGLPWWAKFRTFKGDSRNEEFYTLPFNLNRFFPPS</sequence>
<reference key="1">
    <citation type="journal article" date="1999" name="Nature">
        <title>Sequence and analysis of chromosome 2 of the plant Arabidopsis thaliana.</title>
        <authorList>
            <person name="Lin X."/>
            <person name="Kaul S."/>
            <person name="Rounsley S.D."/>
            <person name="Shea T.P."/>
            <person name="Benito M.-I."/>
            <person name="Town C.D."/>
            <person name="Fujii C.Y."/>
            <person name="Mason T.M."/>
            <person name="Bowman C.L."/>
            <person name="Barnstead M.E."/>
            <person name="Feldblyum T.V."/>
            <person name="Buell C.R."/>
            <person name="Ketchum K.A."/>
            <person name="Lee J.J."/>
            <person name="Ronning C.M."/>
            <person name="Koo H.L."/>
            <person name="Moffat K.S."/>
            <person name="Cronin L.A."/>
            <person name="Shen M."/>
            <person name="Pai G."/>
            <person name="Van Aken S."/>
            <person name="Umayam L."/>
            <person name="Tallon L.J."/>
            <person name="Gill J.E."/>
            <person name="Adams M.D."/>
            <person name="Carrera A.J."/>
            <person name="Creasy T.H."/>
            <person name="Goodman H.M."/>
            <person name="Somerville C.R."/>
            <person name="Copenhaver G.P."/>
            <person name="Preuss D."/>
            <person name="Nierman W.C."/>
            <person name="White O."/>
            <person name="Eisen J.A."/>
            <person name="Salzberg S.L."/>
            <person name="Fraser C.M."/>
            <person name="Venter J.C."/>
        </authorList>
    </citation>
    <scope>NUCLEOTIDE SEQUENCE [LARGE SCALE GENOMIC DNA]</scope>
    <source>
        <strain>cv. Columbia</strain>
    </source>
</reference>
<reference key="2">
    <citation type="journal article" date="2017" name="Plant J.">
        <title>Araport11: a complete reannotation of the Arabidopsis thaliana reference genome.</title>
        <authorList>
            <person name="Cheng C.Y."/>
            <person name="Krishnakumar V."/>
            <person name="Chan A.P."/>
            <person name="Thibaud-Nissen F."/>
            <person name="Schobel S."/>
            <person name="Town C.D."/>
        </authorList>
    </citation>
    <scope>GENOME REANNOTATION</scope>
    <source>
        <strain>cv. Columbia</strain>
    </source>
</reference>
<reference key="3">
    <citation type="journal article" date="2003" name="Science">
        <title>Empirical analysis of transcriptional activity in the Arabidopsis genome.</title>
        <authorList>
            <person name="Yamada K."/>
            <person name="Lim J."/>
            <person name="Dale J.M."/>
            <person name="Chen H."/>
            <person name="Shinn P."/>
            <person name="Palm C.J."/>
            <person name="Southwick A.M."/>
            <person name="Wu H.C."/>
            <person name="Kim C.J."/>
            <person name="Nguyen M."/>
            <person name="Pham P.K."/>
            <person name="Cheuk R.F."/>
            <person name="Karlin-Newmann G."/>
            <person name="Liu S.X."/>
            <person name="Lam B."/>
            <person name="Sakano H."/>
            <person name="Wu T."/>
            <person name="Yu G."/>
            <person name="Miranda M."/>
            <person name="Quach H.L."/>
            <person name="Tripp M."/>
            <person name="Chang C.H."/>
            <person name="Lee J.M."/>
            <person name="Toriumi M.J."/>
            <person name="Chan M.M."/>
            <person name="Tang C.C."/>
            <person name="Onodera C.S."/>
            <person name="Deng J.M."/>
            <person name="Akiyama K."/>
            <person name="Ansari Y."/>
            <person name="Arakawa T."/>
            <person name="Banh J."/>
            <person name="Banno F."/>
            <person name="Bowser L."/>
            <person name="Brooks S.Y."/>
            <person name="Carninci P."/>
            <person name="Chao Q."/>
            <person name="Choy N."/>
            <person name="Enju A."/>
            <person name="Goldsmith A.D."/>
            <person name="Gurjal M."/>
            <person name="Hansen N.F."/>
            <person name="Hayashizaki Y."/>
            <person name="Johnson-Hopson C."/>
            <person name="Hsuan V.W."/>
            <person name="Iida K."/>
            <person name="Karnes M."/>
            <person name="Khan S."/>
            <person name="Koesema E."/>
            <person name="Ishida J."/>
            <person name="Jiang P.X."/>
            <person name="Jones T."/>
            <person name="Kawai J."/>
            <person name="Kamiya A."/>
            <person name="Meyers C."/>
            <person name="Nakajima M."/>
            <person name="Narusaka M."/>
            <person name="Seki M."/>
            <person name="Sakurai T."/>
            <person name="Satou M."/>
            <person name="Tamse R."/>
            <person name="Vaysberg M."/>
            <person name="Wallender E.K."/>
            <person name="Wong C."/>
            <person name="Yamamura Y."/>
            <person name="Yuan S."/>
            <person name="Shinozaki K."/>
            <person name="Davis R.W."/>
            <person name="Theologis A."/>
            <person name="Ecker J.R."/>
        </authorList>
    </citation>
    <scope>NUCLEOTIDE SEQUENCE [LARGE SCALE MRNA]</scope>
    <source>
        <strain>cv. Columbia</strain>
    </source>
</reference>
<reference key="4">
    <citation type="journal article" date="2006" name="Plant Cell Physiol.">
        <title>Identification and expression analysis of twelve members of the nucleobase-ascorbate transporter (NAT) gene family in Arabidopsis thaliana.</title>
        <authorList>
            <person name="Maurino V.G."/>
            <person name="Grube E."/>
            <person name="Zielinski J."/>
            <person name="Schild A."/>
            <person name="Fischer K."/>
            <person name="Flugge U.-I."/>
        </authorList>
    </citation>
    <scope>GENE FAMILY</scope>
    <scope>TISSUE SPECIFICITY</scope>
    <scope>DEVELOPMENTAL STAGE</scope>
</reference>
<protein>
    <recommendedName>
        <fullName>Nucleobase-ascorbate transporter 2</fullName>
        <shortName>AtNAT2</shortName>
    </recommendedName>
</protein>
<keyword id="KW-0472">Membrane</keyword>
<keyword id="KW-1185">Reference proteome</keyword>
<keyword id="KW-0812">Transmembrane</keyword>
<keyword id="KW-1133">Transmembrane helix</keyword>
<keyword id="KW-0813">Transport</keyword>
<organism>
    <name type="scientific">Arabidopsis thaliana</name>
    <name type="common">Mouse-ear cress</name>
    <dbReference type="NCBI Taxonomy" id="3702"/>
    <lineage>
        <taxon>Eukaryota</taxon>
        <taxon>Viridiplantae</taxon>
        <taxon>Streptophyta</taxon>
        <taxon>Embryophyta</taxon>
        <taxon>Tracheophyta</taxon>
        <taxon>Spermatophyta</taxon>
        <taxon>Magnoliopsida</taxon>
        <taxon>eudicotyledons</taxon>
        <taxon>Gunneridae</taxon>
        <taxon>Pentapetalae</taxon>
        <taxon>rosids</taxon>
        <taxon>malvids</taxon>
        <taxon>Brassicales</taxon>
        <taxon>Brassicaceae</taxon>
        <taxon>Camelineae</taxon>
        <taxon>Arabidopsis</taxon>
    </lineage>
</organism>
<proteinExistence type="evidence at transcript level"/>